<reference key="1">
    <citation type="journal article" date="2000" name="J. Biol. Chem.">
        <title>Cloning and functional identification of a neuronal glutamine transporter.</title>
        <authorList>
            <person name="Varoqui H."/>
            <person name="Zhu H."/>
            <person name="Yao D."/>
            <person name="Ming H."/>
            <person name="Erickson J.D."/>
        </authorList>
    </citation>
    <scope>NUCLEOTIDE SEQUENCE [MRNA]</scope>
    <scope>FUNCTION</scope>
    <scope>TRANSPORTER ACTIVITY</scope>
    <scope>ACTIVITY REGULATION</scope>
    <scope>SUBCELLULAR LOCATION</scope>
    <scope>BIOPHYSICOCHEMICAL PROPERTIES</scope>
    <scope>TISSUE SPECIFICITY</scope>
    <source>
        <strain>Sprague-Dawley</strain>
        <tissue>Neuron</tissue>
    </source>
</reference>
<reference key="2">
    <citation type="journal article" date="2004" name="Genome Res.">
        <title>The status, quality, and expansion of the NIH full-length cDNA project: the Mammalian Gene Collection (MGC).</title>
        <authorList>
            <consortium name="The MGC Project Team"/>
        </authorList>
    </citation>
    <scope>NUCLEOTIDE SEQUENCE [LARGE SCALE MRNA]</scope>
    <source>
        <tissue>Placenta</tissue>
    </source>
</reference>
<reference key="3">
    <citation type="journal article" date="2001" name="Pflugers Arch.">
        <title>Na+ transport by the neural glutamine transporter ATA1.</title>
        <authorList>
            <person name="Albers A."/>
            <person name="Broeer A."/>
            <person name="Wagner C.A."/>
            <person name="Setiawan I."/>
            <person name="Lang P.A."/>
            <person name="Kranz E.U."/>
            <person name="Lang F."/>
            <person name="Broeer S."/>
        </authorList>
    </citation>
    <scope>FUNCTION</scope>
    <scope>TRANSPORTER ACTIVITY</scope>
    <scope>BIOPHYSICOCHEMICAL PROPERTIES</scope>
    <scope>ACTIVITY REGULATION</scope>
</reference>
<reference key="4">
    <citation type="journal article" date="2002" name="J. Neurosci.">
        <title>Glutamine uptake by neurons: interaction of protons with system a transporters.</title>
        <authorList>
            <person name="Chaudhry F.A."/>
            <person name="Schmitz D."/>
            <person name="Reimer R.J."/>
            <person name="Larsson P."/>
            <person name="Gray A.T."/>
            <person name="Nicoll R."/>
            <person name="Kavanaugh M."/>
            <person name="Edwards R.H."/>
        </authorList>
    </citation>
    <scope>FUNCTION</scope>
    <scope>TRANSPORTER ACTIVITY</scope>
    <scope>BIOPHYSICOCHEMICAL PROPERTIES</scope>
    <scope>TISSUE SPECIFICITY</scope>
</reference>
<reference key="5">
    <citation type="journal article" date="2003" name="Brain Res. Dev. Brain Res.">
        <title>Ontogeny of the neutral amino acid transporter SAT1/ATA1 in rat brain.</title>
        <authorList>
            <person name="Weiss M.D."/>
            <person name="Derazi S."/>
            <person name="Rossignol C."/>
            <person name="Varoqui H."/>
            <person name="Erickson J.D."/>
            <person name="Kilberg M.S."/>
            <person name="Anderson K.J."/>
        </authorList>
    </citation>
    <scope>TISSUE SPECIFICITY</scope>
    <scope>DEVELOPMENTAL STAGE</scope>
</reference>
<reference key="6">
    <citation type="journal article" date="2003" name="J. Biol. Chem.">
        <title>Functional properties and cellular distribution of the system A glutamine transporter SNAT1 support specialized roles in central neurons.</title>
        <authorList>
            <person name="Mackenzie B."/>
            <person name="Schaefer M.K.-H."/>
            <person name="Erickson J.D."/>
            <person name="Hediger M.A."/>
            <person name="Weihe E."/>
            <person name="Varoqui H."/>
        </authorList>
    </citation>
    <scope>FUNCTION</scope>
    <scope>TRANSPORTER ACTIVITY</scope>
    <scope>BIOPHYSICOCHEMICAL PROPERTIES</scope>
    <scope>SUBCELLULAR LOCATION</scope>
    <scope>TISSUE SPECIFICITY</scope>
</reference>
<reference key="7">
    <citation type="journal article" date="2004" name="Cereb. Cortex">
        <title>Localization of the glutamine transporter SNAT1 in rat cerebral cortex and neighboring structures, with a note on its localization in human cortex.</title>
        <authorList>
            <person name="Melone M."/>
            <person name="Quagliano F."/>
            <person name="Barbaresi P."/>
            <person name="Varoqui H."/>
            <person name="Erickson J.D."/>
            <person name="Conti F."/>
        </authorList>
    </citation>
    <scope>SUBCELLULAR LOCATION</scope>
    <scope>TISSUE SPECIFICITY</scope>
</reference>
<reference key="8">
    <citation type="journal article" date="2006" name="Placenta">
        <title>SNAT expression in rat placenta.</title>
        <authorList>
            <person name="Novak D."/>
            <person name="Lehman M."/>
            <person name="Bernstein H."/>
            <person name="Beveridge M."/>
            <person name="Cramer S."/>
        </authorList>
    </citation>
    <scope>TISSUE SPECIFICITY</scope>
</reference>
<reference key="9">
    <citation type="journal article" date="2007" name="J. Cell. Physiol.">
        <title>Upregulation of the glutamine transporter through transactivation mediated by cAMP/protein kinase A signals toward exacerbation of vulnerability to oxidative stress in rat neocortical astrocytes.</title>
        <authorList>
            <person name="Ogura M."/>
            <person name="Taniura H."/>
            <person name="Nakamichi N."/>
            <person name="Yoneda Y."/>
        </authorList>
    </citation>
    <scope>INDUCTION BY FORSKOLIN</scope>
</reference>
<reference key="10">
    <citation type="journal article" date="2012" name="Nat. Commun.">
        <title>Quantitative maps of protein phosphorylation sites across 14 different rat organs and tissues.</title>
        <authorList>
            <person name="Lundby A."/>
            <person name="Secher A."/>
            <person name="Lage K."/>
            <person name="Nordsborg N.B."/>
            <person name="Dmytriyev A."/>
            <person name="Lundby C."/>
            <person name="Olsen J.V."/>
        </authorList>
    </citation>
    <scope>PHOSPHORYLATION [LARGE SCALE ANALYSIS] AT SER-52; THR-54 AND SER-56</scope>
    <scope>IDENTIFICATION BY MASS SPECTROMETRY [LARGE SCALE ANALYSIS]</scope>
</reference>
<dbReference type="EMBL" id="AF075704">
    <property type="protein sequence ID" value="AAF34240.1"/>
    <property type="molecule type" value="mRNA"/>
</dbReference>
<dbReference type="EMBL" id="BC097283">
    <property type="protein sequence ID" value="AAH97283.1"/>
    <property type="molecule type" value="mRNA"/>
</dbReference>
<dbReference type="RefSeq" id="NP_620187.1">
    <property type="nucleotide sequence ID" value="NM_138832.1"/>
</dbReference>
<dbReference type="RefSeq" id="XP_006242339.1">
    <property type="nucleotide sequence ID" value="XM_006242277.5"/>
</dbReference>
<dbReference type="RefSeq" id="XP_006242340.1">
    <property type="nucleotide sequence ID" value="XM_006242278.3"/>
</dbReference>
<dbReference type="RefSeq" id="XP_006242341.1">
    <property type="nucleotide sequence ID" value="XM_006242279.3"/>
</dbReference>
<dbReference type="RefSeq" id="XP_006242342.1">
    <property type="nucleotide sequence ID" value="XM_006242280.5"/>
</dbReference>
<dbReference type="RefSeq" id="XP_006242343.1">
    <property type="nucleotide sequence ID" value="XM_006242281.5"/>
</dbReference>
<dbReference type="RefSeq" id="XP_017450126.1">
    <property type="nucleotide sequence ID" value="XM_017594637.1"/>
</dbReference>
<dbReference type="RefSeq" id="XP_063119005.1">
    <property type="nucleotide sequence ID" value="XM_063262935.1"/>
</dbReference>
<dbReference type="RefSeq" id="XP_063119006.1">
    <property type="nucleotide sequence ID" value="XM_063262936.1"/>
</dbReference>
<dbReference type="SMR" id="Q9JM15"/>
<dbReference type="FunCoup" id="Q9JM15">
    <property type="interactions" value="1075"/>
</dbReference>
<dbReference type="STRING" id="10116.ENSRNOP00000008138"/>
<dbReference type="TCDB" id="2.A.18.6.1">
    <property type="family name" value="the amino acid/auxin permease (aaap) family"/>
</dbReference>
<dbReference type="GlyCosmos" id="Q9JM15">
    <property type="glycosylation" value="2 sites, No reported glycans"/>
</dbReference>
<dbReference type="GlyGen" id="Q9JM15">
    <property type="glycosylation" value="2 sites"/>
</dbReference>
<dbReference type="iPTMnet" id="Q9JM15"/>
<dbReference type="PhosphoSitePlus" id="Q9JM15"/>
<dbReference type="PaxDb" id="10116-ENSRNOP00000008138"/>
<dbReference type="ABCD" id="Q9JM15">
    <property type="antibodies" value="2 sequenced antibodies"/>
</dbReference>
<dbReference type="Ensembl" id="ENSRNOT00000008138.5">
    <property type="protein sequence ID" value="ENSRNOP00000008138.3"/>
    <property type="gene ID" value="ENSRNOG00000005291.7"/>
</dbReference>
<dbReference type="GeneID" id="170567"/>
<dbReference type="KEGG" id="rno:170567"/>
<dbReference type="UCSC" id="RGD:69645">
    <property type="organism name" value="rat"/>
</dbReference>
<dbReference type="AGR" id="RGD:69645"/>
<dbReference type="CTD" id="81539"/>
<dbReference type="RGD" id="69645">
    <property type="gene designation" value="Slc38a1"/>
</dbReference>
<dbReference type="eggNOG" id="KOG1305">
    <property type="taxonomic scope" value="Eukaryota"/>
</dbReference>
<dbReference type="GeneTree" id="ENSGT00940000160716"/>
<dbReference type="HOGENOM" id="CLU_009020_0_2_1"/>
<dbReference type="InParanoid" id="Q9JM15"/>
<dbReference type="OMA" id="CSAMAIY"/>
<dbReference type="OrthoDB" id="655540at2759"/>
<dbReference type="PhylomeDB" id="Q9JM15"/>
<dbReference type="TreeFam" id="TF328787"/>
<dbReference type="Reactome" id="R-RNO-210455">
    <property type="pathway name" value="Astrocytic Glutamate-Glutamine Uptake And Metabolism"/>
</dbReference>
<dbReference type="Reactome" id="R-RNO-352230">
    <property type="pathway name" value="Amino acid transport across the plasma membrane"/>
</dbReference>
<dbReference type="SABIO-RK" id="Q9JM15"/>
<dbReference type="PRO" id="PR:Q9JM15"/>
<dbReference type="Proteomes" id="UP000002494">
    <property type="component" value="Chromosome 7"/>
</dbReference>
<dbReference type="Bgee" id="ENSRNOG00000005291">
    <property type="expression patterns" value="Expressed in frontal cortex and 20 other cell types or tissues"/>
</dbReference>
<dbReference type="GO" id="GO:0030424">
    <property type="term" value="C:axon"/>
    <property type="evidence" value="ECO:0000266"/>
    <property type="project" value="RGD"/>
</dbReference>
<dbReference type="GO" id="GO:0016323">
    <property type="term" value="C:basolateral plasma membrane"/>
    <property type="evidence" value="ECO:0000266"/>
    <property type="project" value="RGD"/>
</dbReference>
<dbReference type="GO" id="GO:0098591">
    <property type="term" value="C:external side of apical plasma membrane"/>
    <property type="evidence" value="ECO:0000314"/>
    <property type="project" value="ARUK-UCL"/>
</dbReference>
<dbReference type="GO" id="GO:0016020">
    <property type="term" value="C:membrane"/>
    <property type="evidence" value="ECO:0000266"/>
    <property type="project" value="RGD"/>
</dbReference>
<dbReference type="GO" id="GO:0043025">
    <property type="term" value="C:neuronal cell body"/>
    <property type="evidence" value="ECO:0000314"/>
    <property type="project" value="ARUK-UCL"/>
</dbReference>
<dbReference type="GO" id="GO:0005886">
    <property type="term" value="C:plasma membrane"/>
    <property type="evidence" value="ECO:0000314"/>
    <property type="project" value="UniProtKB"/>
</dbReference>
<dbReference type="GO" id="GO:0022853">
    <property type="term" value="F:active monoatomic ion transmembrane transporter activity"/>
    <property type="evidence" value="ECO:0007669"/>
    <property type="project" value="UniProtKB-ARBA"/>
</dbReference>
<dbReference type="GO" id="GO:0015655">
    <property type="term" value="F:alanine:sodium symporter activity"/>
    <property type="evidence" value="ECO:0000314"/>
    <property type="project" value="UniProtKB"/>
</dbReference>
<dbReference type="GO" id="GO:0005283">
    <property type="term" value="F:amino acid:sodium symporter activity"/>
    <property type="evidence" value="ECO:0000314"/>
    <property type="project" value="UniProtKB"/>
</dbReference>
<dbReference type="GO" id="GO:0015375">
    <property type="term" value="F:glycine:sodium symporter activity"/>
    <property type="evidence" value="ECO:0000314"/>
    <property type="project" value="UniProtKB"/>
</dbReference>
<dbReference type="GO" id="GO:0015179">
    <property type="term" value="F:L-amino acid transmembrane transporter activity"/>
    <property type="evidence" value="ECO:0000314"/>
    <property type="project" value="ARUK-UCL"/>
</dbReference>
<dbReference type="GO" id="GO:0015186">
    <property type="term" value="F:L-glutamine transmembrane transporter activity"/>
    <property type="evidence" value="ECO:0000314"/>
    <property type="project" value="ARUK-UCL"/>
</dbReference>
<dbReference type="GO" id="GO:0005295">
    <property type="term" value="F:neutral L-amino acid:sodium symporter activity"/>
    <property type="evidence" value="ECO:0000314"/>
    <property type="project" value="UniProtKB"/>
</dbReference>
<dbReference type="GO" id="GO:0005298">
    <property type="term" value="F:proline:sodium symporter activity"/>
    <property type="evidence" value="ECO:0000314"/>
    <property type="project" value="UniProtKB"/>
</dbReference>
<dbReference type="GO" id="GO:0043090">
    <property type="term" value="P:amino acid import"/>
    <property type="evidence" value="ECO:0000314"/>
    <property type="project" value="UniProtKB"/>
</dbReference>
<dbReference type="GO" id="GO:0003333">
    <property type="term" value="P:amino acid transmembrane transport"/>
    <property type="evidence" value="ECO:0000318"/>
    <property type="project" value="GO_Central"/>
</dbReference>
<dbReference type="GO" id="GO:0007565">
    <property type="term" value="P:female pregnancy"/>
    <property type="evidence" value="ECO:0000270"/>
    <property type="project" value="RGD"/>
</dbReference>
<dbReference type="GO" id="GO:0009449">
    <property type="term" value="P:gamma-aminobutyric acid biosynthetic process"/>
    <property type="evidence" value="ECO:0000250"/>
    <property type="project" value="UniProtKB"/>
</dbReference>
<dbReference type="GO" id="GO:0006868">
    <property type="term" value="P:glutamine transport"/>
    <property type="evidence" value="ECO:0000250"/>
    <property type="project" value="UniProtKB"/>
</dbReference>
<dbReference type="GO" id="GO:1902475">
    <property type="term" value="P:L-alpha-amino acid transmembrane transport"/>
    <property type="evidence" value="ECO:0000314"/>
    <property type="project" value="ARUK-UCL"/>
</dbReference>
<dbReference type="GO" id="GO:1903803">
    <property type="term" value="P:L-glutamine import across plasma membrane"/>
    <property type="evidence" value="ECO:0000314"/>
    <property type="project" value="UniProtKB"/>
</dbReference>
<dbReference type="GO" id="GO:0015804">
    <property type="term" value="P:neutral amino acid transport"/>
    <property type="evidence" value="ECO:0000314"/>
    <property type="project" value="ARUK-UCL"/>
</dbReference>
<dbReference type="GO" id="GO:0048167">
    <property type="term" value="P:regulation of synaptic plasticity"/>
    <property type="evidence" value="ECO:0000250"/>
    <property type="project" value="UniProtKB"/>
</dbReference>
<dbReference type="GO" id="GO:0032228">
    <property type="term" value="P:regulation of synaptic transmission, GABAergic"/>
    <property type="evidence" value="ECO:0000250"/>
    <property type="project" value="UniProtKB"/>
</dbReference>
<dbReference type="InterPro" id="IPR013057">
    <property type="entry name" value="AA_transpt_TM"/>
</dbReference>
<dbReference type="PANTHER" id="PTHR22950">
    <property type="entry name" value="AMINO ACID TRANSPORTER"/>
    <property type="match status" value="1"/>
</dbReference>
<dbReference type="PANTHER" id="PTHR22950:SF184">
    <property type="entry name" value="SODIUM-COUPLED NEUTRAL AMINO ACID SYMPORTER 1"/>
    <property type="match status" value="1"/>
</dbReference>
<dbReference type="Pfam" id="PF01490">
    <property type="entry name" value="Aa_trans"/>
    <property type="match status" value="1"/>
</dbReference>
<evidence type="ECO:0000250" key="1">
    <source>
        <dbReference type="UniProtKB" id="Q8K2P7"/>
    </source>
</evidence>
<evidence type="ECO:0000250" key="2">
    <source>
        <dbReference type="UniProtKB" id="Q9H2H9"/>
    </source>
</evidence>
<evidence type="ECO:0000255" key="3"/>
<evidence type="ECO:0000255" key="4">
    <source>
        <dbReference type="PROSITE-ProRule" id="PRU00114"/>
    </source>
</evidence>
<evidence type="ECO:0000269" key="5">
    <source>
    </source>
</evidence>
<evidence type="ECO:0000269" key="6">
    <source>
    </source>
</evidence>
<evidence type="ECO:0000269" key="7">
    <source>
    </source>
</evidence>
<evidence type="ECO:0000269" key="8">
    <source>
    </source>
</evidence>
<evidence type="ECO:0000269" key="9">
    <source>
    </source>
</evidence>
<evidence type="ECO:0000269" key="10">
    <source>
    </source>
</evidence>
<evidence type="ECO:0000269" key="11">
    <source>
    </source>
</evidence>
<evidence type="ECO:0000269" key="12">
    <source>
    </source>
</evidence>
<evidence type="ECO:0000303" key="13">
    <source>
    </source>
</evidence>
<evidence type="ECO:0000303" key="14">
    <source>
    </source>
</evidence>
<evidence type="ECO:0000303" key="15">
    <source>
    </source>
</evidence>
<evidence type="ECO:0000305" key="16"/>
<evidence type="ECO:0000305" key="17">
    <source>
    </source>
</evidence>
<evidence type="ECO:0000305" key="18">
    <source>
    </source>
</evidence>
<evidence type="ECO:0000305" key="19">
    <source>
    </source>
</evidence>
<evidence type="ECO:0000312" key="20">
    <source>
        <dbReference type="RGD" id="69645"/>
    </source>
</evidence>
<evidence type="ECO:0007744" key="21">
    <source>
    </source>
</evidence>
<comment type="function">
    <text evidence="1 2 5 6 7 8">Symporter that cotransports short-chain neutral amino acids and sodium ions from the extraccellular to the intracellular side of the cell membrane (PubMed:10660562, PubMed:11692272, PubMed:11756489, PubMed:12684517). The transport is elctrogenic, pH dependent and driven by the Na(+) electrochemical gradient (PubMed:11692272, PubMed:11756489, PubMed:12684517). Participates in the astroglia-derived glutamine transport into GABAergic interneurons for neurotransmitter GABA de novo synthesis (PubMed:10660562, PubMed:11756489). May also contributes to amino acid transport in placental trophoblast (By similarity). Regulates synaptic plasticity (By similarity).</text>
</comment>
<comment type="catalytic activity">
    <reaction evidence="5 6 7 8">
        <text>L-glutamine(in) + Na(+)(in) = L-glutamine(out) + Na(+)(out)</text>
        <dbReference type="Rhea" id="RHEA:68236"/>
        <dbReference type="ChEBI" id="CHEBI:29101"/>
        <dbReference type="ChEBI" id="CHEBI:58359"/>
    </reaction>
    <physiologicalReaction direction="right-to-left" evidence="5 18">
        <dbReference type="Rhea" id="RHEA:68238"/>
    </physiologicalReaction>
</comment>
<comment type="catalytic activity">
    <reaction evidence="6 7 8">
        <text>L-alanine(in) + Na(+)(in) = L-alanine(out) + Na(+)(out)</text>
        <dbReference type="Rhea" id="RHEA:29283"/>
        <dbReference type="ChEBI" id="CHEBI:29101"/>
        <dbReference type="ChEBI" id="CHEBI:57972"/>
    </reaction>
    <physiologicalReaction direction="right-to-left" evidence="18">
        <dbReference type="Rhea" id="RHEA:29285"/>
    </physiologicalReaction>
</comment>
<comment type="catalytic activity">
    <reaction evidence="6 7 8">
        <text>L-asparagine(in) + Na(+)(in) = L-asparagine(out) + Na(+)(out)</text>
        <dbReference type="Rhea" id="RHEA:71383"/>
        <dbReference type="ChEBI" id="CHEBI:29101"/>
        <dbReference type="ChEBI" id="CHEBI:58048"/>
    </reaction>
    <physiologicalReaction direction="right-to-left" evidence="18">
        <dbReference type="Rhea" id="RHEA:71385"/>
    </physiologicalReaction>
</comment>
<comment type="catalytic activity">
    <reaction evidence="6 7 8">
        <text>L-histidine(in) + Na(+)(in) = L-histidine(out) + Na(+)(out)</text>
        <dbReference type="Rhea" id="RHEA:71583"/>
        <dbReference type="ChEBI" id="CHEBI:29101"/>
        <dbReference type="ChEBI" id="CHEBI:57595"/>
    </reaction>
    <physiologicalReaction direction="right-to-left" evidence="18">
        <dbReference type="Rhea" id="RHEA:71585"/>
    </physiologicalReaction>
</comment>
<comment type="catalytic activity">
    <reaction evidence="6 7 8">
        <text>L-serine(in) + Na(+)(in) = L-serine(out) + Na(+)(out)</text>
        <dbReference type="Rhea" id="RHEA:29575"/>
        <dbReference type="ChEBI" id="CHEBI:29101"/>
        <dbReference type="ChEBI" id="CHEBI:33384"/>
    </reaction>
    <physiologicalReaction direction="right-to-left" evidence="18">
        <dbReference type="Rhea" id="RHEA:29577"/>
    </physiologicalReaction>
</comment>
<comment type="catalytic activity">
    <reaction evidence="6 7 8">
        <text>L-cysteine(in) + Na(+)(in) = L-cysteine(out) + Na(+)(out)</text>
        <dbReference type="Rhea" id="RHEA:68232"/>
        <dbReference type="ChEBI" id="CHEBI:29101"/>
        <dbReference type="ChEBI" id="CHEBI:35235"/>
    </reaction>
    <physiologicalReaction direction="right-to-left" evidence="18">
        <dbReference type="Rhea" id="RHEA:68234"/>
    </physiologicalReaction>
</comment>
<comment type="catalytic activity">
    <reaction evidence="6 7 8">
        <text>L-methionine(in) + Na(+)(in) = L-methionine(out) + Na(+)(out)</text>
        <dbReference type="Rhea" id="RHEA:68240"/>
        <dbReference type="ChEBI" id="CHEBI:29101"/>
        <dbReference type="ChEBI" id="CHEBI:57844"/>
    </reaction>
    <physiologicalReaction direction="right-to-left" evidence="18">
        <dbReference type="Rhea" id="RHEA:68242"/>
    </physiologicalReaction>
</comment>
<comment type="catalytic activity">
    <reaction evidence="6 8">
        <text>glycine(in) + Na(+)(in) = glycine(out) + Na(+)(out)</text>
        <dbReference type="Rhea" id="RHEA:68228"/>
        <dbReference type="ChEBI" id="CHEBI:29101"/>
        <dbReference type="ChEBI" id="CHEBI:57305"/>
    </reaction>
    <physiologicalReaction direction="right-to-left" evidence="18">
        <dbReference type="Rhea" id="RHEA:68230"/>
    </physiologicalReaction>
</comment>
<comment type="catalytic activity">
    <reaction evidence="6 8">
        <text>L-threonine(in) + Na(+)(in) = L-threonine(out) + Na(+)(out)</text>
        <dbReference type="Rhea" id="RHEA:69999"/>
        <dbReference type="ChEBI" id="CHEBI:29101"/>
        <dbReference type="ChEBI" id="CHEBI:57926"/>
    </reaction>
    <physiologicalReaction direction="right-to-left" evidence="18">
        <dbReference type="Rhea" id="RHEA:70001"/>
    </physiologicalReaction>
</comment>
<comment type="catalytic activity">
    <reaction evidence="6 8">
        <text>L-proline(in) + Na(+)(in) = L-proline(out) + Na(+)(out)</text>
        <dbReference type="Rhea" id="RHEA:28967"/>
        <dbReference type="ChEBI" id="CHEBI:29101"/>
        <dbReference type="ChEBI" id="CHEBI:60039"/>
    </reaction>
    <physiologicalReaction direction="right-to-left" evidence="18">
        <dbReference type="Rhea" id="RHEA:28969"/>
    </physiologicalReaction>
</comment>
<comment type="activity regulation">
    <text evidence="5 6">Inhibited by alpha-(methylamino)isobutyric acid (MeAIB) (PubMed:10660562, PubMed:11692272). Inhibited by lithium, potassium, choline ions, N-methylglucamine (PubMed:11692272). The pH dependence has an allosteric effect on the transport (PubMed:11692272).</text>
</comment>
<comment type="biophysicochemical properties">
    <kinetics>
        <KM evidence="5">489 uM for L-glutamine (at pH 7.4)</KM>
        <KM evidence="5">582 uM for L-glutamine (at pH 8.2)</KM>
        <KM evidence="6">513 uM for L-alanine (at pH 7.4 and at a sodium ions concentration of 100 mM)</KM>
        <KM evidence="6">506 uM for L-alanine (at pH 7.4 and at a sodium ions concentration of 100 mM)</KM>
        <KM evidence="6">239 uM for L-glutamine (100 mM of NaCl and a membrane potential of (-)60 mV)</KM>
        <KM evidence="6">137 uM for L-glutamine (100 mM of NaCl and a membrane potential of (-)30 mV)</KM>
        <KM evidence="6">300 uM for L-glutamine (30 mM of NaCl and a membrane potential of (-)60 mV)</KM>
        <KM evidence="6">550 uM for L-glutamine (10 mM of NaCl and a membrane potential of (-)60 mV)</KM>
        <KM evidence="6">306 uM for L-alanine (100 mM of NaCl and a membrane potential of (-)60 mV)</KM>
        <KM evidence="6">3.4 mM for sodium ion (1 mM of L-glutamine and a membrane potential of (-)30 mV)</KM>
        <KM evidence="6">1.4 mM for sodium ion (1 mM of L-glutamine and a membrane potential of (-)60 mV)</KM>
        <KM evidence="6">2.4 mM for sodium ion (0.2 mM of L-glutamine and a membrane potential of (-)60 mV)</KM>
        <KM evidence="6">1.7 mM for sodium ion (1 mM of L-alanine and a membrane potential of (-)60 mV)</KM>
        <KM evidence="6">1.6 mM for sodium ion (0.2 mM of L-alanine and a membrane potential of (-)60 mV)</KM>
        <KM evidence="6">5 mM for sodium ion (Varied NaCl concentration and 1 mM of L-glutamine)</KM>
        <KM evidence="7">146 mM for sodium ion (at pH 8)</KM>
    </kinetics>
</comment>
<comment type="subcellular location">
    <subcellularLocation>
        <location evidence="5 8 10">Cell membrane</location>
        <topology evidence="17">Multi-pass membrane protein</topology>
    </subcellularLocation>
    <text evidence="19">Restricted to the somatodendritic compartment of neurons (Probable). Found in the cellular processes of neurons in the developing brain.</text>
</comment>
<comment type="tissue specificity">
    <text evidence="5 7 8 9 10 11">Specifically expressed in brain with the highest levels in cerebellum and thalamus (at protein level) (PubMed:10660562). Expressed in glutamatergic, GABAergic and a subset of dopaminergic neurons of the substantia nigra and cholinergic motoneurons (at protein level) (PubMed:12684517). Also expressed by ependymal cells lining the ventricle (at protein level). Expression is also detected in spinal cord, heart, colon and placenta (PubMed:16023720).</text>
</comment>
<comment type="developmental stage">
    <text evidence="9">Expressed at all stages examined including 17 dpc, 19 dpc, P2, P10 and P14. Expressed in neocortex, hippocampus and neuroepithelium at 17 dpc and more prominently expressed in striatum, hippocampus and cortex at postnatal days (at protein level).</text>
</comment>
<comment type="induction">
    <text evidence="12">Up-regulated by forskolin in astrocytes.</text>
</comment>
<comment type="PTM">
    <text evidence="1">N-glycosylation plays an important role in the L-glutamine transport.</text>
</comment>
<comment type="similarity">
    <text evidence="16">Belongs to the amino acid/polyamine transporter 2 family.</text>
</comment>
<keyword id="KW-0029">Amino-acid transport</keyword>
<keyword id="KW-1003">Cell membrane</keyword>
<keyword id="KW-1015">Disulfide bond</keyword>
<keyword id="KW-0325">Glycoprotein</keyword>
<keyword id="KW-0406">Ion transport</keyword>
<keyword id="KW-0472">Membrane</keyword>
<keyword id="KW-0597">Phosphoprotein</keyword>
<keyword id="KW-1185">Reference proteome</keyword>
<keyword id="KW-0915">Sodium</keyword>
<keyword id="KW-0739">Sodium transport</keyword>
<keyword id="KW-0769">Symport</keyword>
<keyword id="KW-0812">Transmembrane</keyword>
<keyword id="KW-1133">Transmembrane helix</keyword>
<keyword id="KW-0813">Transport</keyword>
<gene>
    <name evidence="20" type="primary">Slc38a1</name>
    <name evidence="13 15" type="synonym">Ata1</name>
    <name type="synonym">Glnt</name>
    <name type="synonym">Sa2</name>
    <name evidence="15" type="synonym">Sat1</name>
    <name evidence="14" type="synonym">Snat1</name>
</gene>
<accession>Q9JM15</accession>
<protein>
    <recommendedName>
        <fullName evidence="16">Sodium-coupled neutral amino acid symporter 1</fullName>
    </recommendedName>
    <alternativeName>
        <fullName>Amino acid transporter A1</fullName>
        <shortName>rATA1</shortName>
    </alternativeName>
    <alternativeName>
        <fullName>Glutamine transporter</fullName>
    </alternativeName>
    <alternativeName>
        <fullName>N-system amino acid transporter 2</fullName>
    </alternativeName>
    <alternativeName>
        <fullName>Solute carrier family 38 member 1</fullName>
    </alternativeName>
    <alternativeName>
        <fullName>System A amino acid transporter 1</fullName>
    </alternativeName>
    <alternativeName>
        <fullName>System A transporter 2</fullName>
    </alternativeName>
    <alternativeName>
        <fullName>System N amino acid transporter 1</fullName>
    </alternativeName>
</protein>
<proteinExistence type="evidence at protein level"/>
<sequence>MMHFKSGLELTELQNMTVPEDDNVSNDSNDFTEVENGQINSKFISDRESRRSLTNSHLEKRKCDEYIPGTTSLGMSVFNLSNAIMGSGILGLAFALANTGILLFLILLTSVTLLSIYSINLLLICSKETGCMVYEKLGEQVFGTTGKLVIFGATSLQNTGAMLSYLFIVKNELPSAIKSLMGEEETFSAWYVDGRVLVVMVTFGIILPLCLLKNLGYLGYTSGFSLSCMVFFLIVVIYKKFQIPCMNGEQNSTVSANVTDACTPKYVTFNSKTVYALPTIAFAFVCHPSVLPIYSELKDRSQKKMQMVSNISFFAMFVMYFLTAIFGYLTFYEKVQSDLLHKYQSTGDILILTVRLAVIVAVILTVPVLFFTVRSSLFELAKKTKFHLCRHVLVTIILLVIINLLVIFIPSMKDIFGVVGVTSANMLIFILPSSLYLKITNQDGDKNTQRIWAALFLALGVLFSLISIPLVIYDWACSSSNGEGH</sequence>
<name>S38A1_RAT</name>
<feature type="chain" id="PRO_0000310478" description="Sodium-coupled neutral amino acid symporter 1">
    <location>
        <begin position="1"/>
        <end position="485"/>
    </location>
</feature>
<feature type="topological domain" description="Cytoplasmic" evidence="3">
    <location>
        <begin position="1"/>
        <end position="74"/>
    </location>
</feature>
<feature type="transmembrane region" description="Helical" evidence="3">
    <location>
        <begin position="75"/>
        <end position="97"/>
    </location>
</feature>
<feature type="topological domain" description="Extracellular" evidence="3">
    <location>
        <begin position="98"/>
        <end position="112"/>
    </location>
</feature>
<feature type="transmembrane region" description="Helical" evidence="3">
    <location>
        <begin position="113"/>
        <end position="133"/>
    </location>
</feature>
<feature type="topological domain" description="Cytoplasmic" evidence="3">
    <location>
        <begin position="134"/>
        <end position="148"/>
    </location>
</feature>
<feature type="transmembrane region" description="Helical" evidence="3">
    <location>
        <begin position="149"/>
        <end position="169"/>
    </location>
</feature>
<feature type="topological domain" description="Extracellular" evidence="3">
    <location>
        <begin position="170"/>
        <end position="188"/>
    </location>
</feature>
<feature type="transmembrane region" description="Helical" evidence="3">
    <location>
        <begin position="189"/>
        <end position="211"/>
    </location>
</feature>
<feature type="topological domain" description="Cytoplasmic" evidence="3">
    <location>
        <begin position="212"/>
        <end position="216"/>
    </location>
</feature>
<feature type="transmembrane region" description="Helical" evidence="3">
    <location>
        <begin position="217"/>
        <end position="237"/>
    </location>
</feature>
<feature type="topological domain" description="Extracellular" evidence="3">
    <location>
        <begin position="238"/>
        <end position="273"/>
    </location>
</feature>
<feature type="transmembrane region" description="Helical" evidence="3">
    <location>
        <begin position="274"/>
        <end position="294"/>
    </location>
</feature>
<feature type="topological domain" description="Cytoplasmic" evidence="3">
    <location>
        <begin position="295"/>
        <end position="310"/>
    </location>
</feature>
<feature type="transmembrane region" description="Helical" evidence="3">
    <location>
        <begin position="311"/>
        <end position="331"/>
    </location>
</feature>
<feature type="topological domain" description="Extracellular" evidence="3">
    <location>
        <begin position="332"/>
        <end position="348"/>
    </location>
</feature>
<feature type="transmembrane region" description="Helical" evidence="3">
    <location>
        <begin position="349"/>
        <end position="369"/>
    </location>
</feature>
<feature type="topological domain" description="Cytoplasmic" evidence="3">
    <location>
        <begin position="370"/>
        <end position="391"/>
    </location>
</feature>
<feature type="transmembrane region" description="Helical" evidence="3">
    <location>
        <begin position="392"/>
        <end position="412"/>
    </location>
</feature>
<feature type="topological domain" description="Extracellular" evidence="3">
    <location>
        <begin position="413"/>
        <end position="414"/>
    </location>
</feature>
<feature type="transmembrane region" description="Helical" evidence="3">
    <location>
        <begin position="415"/>
        <end position="435"/>
    </location>
</feature>
<feature type="topological domain" description="Cytoplasmic" evidence="3">
    <location>
        <begin position="436"/>
        <end position="450"/>
    </location>
</feature>
<feature type="transmembrane region" description="Helical" evidence="3">
    <location>
        <begin position="451"/>
        <end position="471"/>
    </location>
</feature>
<feature type="topological domain" description="Extracellular" evidence="3">
    <location>
        <begin position="472"/>
        <end position="485"/>
    </location>
</feature>
<feature type="modified residue" description="Phosphoserine" evidence="1">
    <location>
        <position position="6"/>
    </location>
</feature>
<feature type="modified residue" description="Phosphothreonine" evidence="1">
    <location>
        <position position="11"/>
    </location>
</feature>
<feature type="modified residue" description="Phosphoserine" evidence="2">
    <location>
        <position position="25"/>
    </location>
</feature>
<feature type="modified residue" description="Phosphoserine" evidence="2">
    <location>
        <position position="28"/>
    </location>
</feature>
<feature type="modified residue" description="Phosphoserine" evidence="2">
    <location>
        <position position="49"/>
    </location>
</feature>
<feature type="modified residue" description="Phosphoserine" evidence="21">
    <location>
        <position position="52"/>
    </location>
</feature>
<feature type="modified residue" description="Phosphothreonine" evidence="21">
    <location>
        <position position="54"/>
    </location>
</feature>
<feature type="modified residue" description="Phosphoserine" evidence="21">
    <location>
        <position position="56"/>
    </location>
</feature>
<feature type="glycosylation site" description="N-linked (GlcNAc...) asparagine" evidence="3">
    <location>
        <position position="251"/>
    </location>
</feature>
<feature type="glycosylation site" description="N-linked (GlcNAc...) asparagine" evidence="3">
    <location>
        <position position="257"/>
    </location>
</feature>
<feature type="disulfide bond" evidence="4">
    <location>
        <begin position="245"/>
        <end position="262"/>
    </location>
</feature>
<organism>
    <name type="scientific">Rattus norvegicus</name>
    <name type="common">Rat</name>
    <dbReference type="NCBI Taxonomy" id="10116"/>
    <lineage>
        <taxon>Eukaryota</taxon>
        <taxon>Metazoa</taxon>
        <taxon>Chordata</taxon>
        <taxon>Craniata</taxon>
        <taxon>Vertebrata</taxon>
        <taxon>Euteleostomi</taxon>
        <taxon>Mammalia</taxon>
        <taxon>Eutheria</taxon>
        <taxon>Euarchontoglires</taxon>
        <taxon>Glires</taxon>
        <taxon>Rodentia</taxon>
        <taxon>Myomorpha</taxon>
        <taxon>Muroidea</taxon>
        <taxon>Muridae</taxon>
        <taxon>Murinae</taxon>
        <taxon>Rattus</taxon>
    </lineage>
</organism>